<keyword id="KW-0963">Cytoplasm</keyword>
<keyword id="KW-0378">Hydrolase</keyword>
<keyword id="KW-1185">Reference proteome</keyword>
<keyword id="KW-0732">Signal</keyword>
<dbReference type="EC" id="3.5.1.4"/>
<dbReference type="EMBL" id="CU329670">
    <property type="protein sequence ID" value="CAB60011.1"/>
    <property type="molecule type" value="Genomic_DNA"/>
</dbReference>
<dbReference type="PIR" id="T39112">
    <property type="entry name" value="T39112"/>
</dbReference>
<dbReference type="RefSeq" id="NP_595018.1">
    <property type="nucleotide sequence ID" value="NM_001020449.2"/>
</dbReference>
<dbReference type="SMR" id="Q9URY4"/>
<dbReference type="FunCoup" id="Q9URY4">
    <property type="interactions" value="212"/>
</dbReference>
<dbReference type="STRING" id="284812.Q9URY4"/>
<dbReference type="iPTMnet" id="Q9URY4"/>
<dbReference type="SwissPalm" id="Q9URY4"/>
<dbReference type="PaxDb" id="4896-SPAC869.01.1"/>
<dbReference type="EnsemblFungi" id="SPAC869.01.1">
    <property type="protein sequence ID" value="SPAC869.01.1:pep"/>
    <property type="gene ID" value="SPAC869.01"/>
</dbReference>
<dbReference type="KEGG" id="spo:2543104"/>
<dbReference type="PomBase" id="SPAC869.01"/>
<dbReference type="VEuPathDB" id="FungiDB:SPAC869.01"/>
<dbReference type="eggNOG" id="KOG1211">
    <property type="taxonomic scope" value="Eukaryota"/>
</dbReference>
<dbReference type="HOGENOM" id="CLU_009600_14_4_1"/>
<dbReference type="InParanoid" id="Q9URY4"/>
<dbReference type="OMA" id="DGWDWDY"/>
<dbReference type="PhylomeDB" id="Q9URY4"/>
<dbReference type="PRO" id="PR:Q9URY4"/>
<dbReference type="Proteomes" id="UP000002485">
    <property type="component" value="Chromosome I"/>
</dbReference>
<dbReference type="GO" id="GO:0005829">
    <property type="term" value="C:cytosol"/>
    <property type="evidence" value="ECO:0007005"/>
    <property type="project" value="PomBase"/>
</dbReference>
<dbReference type="GO" id="GO:0004040">
    <property type="term" value="F:amidase activity"/>
    <property type="evidence" value="ECO:0007669"/>
    <property type="project" value="UniProtKB-EC"/>
</dbReference>
<dbReference type="GO" id="GO:0016811">
    <property type="term" value="F:hydrolase activity, acting on carbon-nitrogen (but not peptide) bonds, in linear amides"/>
    <property type="evidence" value="ECO:0000255"/>
    <property type="project" value="PomBase"/>
</dbReference>
<dbReference type="Gene3D" id="3.90.1300.10">
    <property type="entry name" value="Amidase signature (AS) domain"/>
    <property type="match status" value="1"/>
</dbReference>
<dbReference type="InterPro" id="IPR023631">
    <property type="entry name" value="Amidase_dom"/>
</dbReference>
<dbReference type="InterPro" id="IPR036928">
    <property type="entry name" value="AS_sf"/>
</dbReference>
<dbReference type="PANTHER" id="PTHR42678">
    <property type="entry name" value="AMIDASE"/>
    <property type="match status" value="1"/>
</dbReference>
<dbReference type="PANTHER" id="PTHR42678:SF37">
    <property type="entry name" value="AMIDASE C869.01-RELATED"/>
    <property type="match status" value="1"/>
</dbReference>
<dbReference type="Pfam" id="PF01425">
    <property type="entry name" value="Amidase"/>
    <property type="match status" value="1"/>
</dbReference>
<dbReference type="SUPFAM" id="SSF75304">
    <property type="entry name" value="Amidase signature (AS) enzymes"/>
    <property type="match status" value="1"/>
</dbReference>
<accession>Q9URY4</accession>
<evidence type="ECO:0000250" key="1"/>
<evidence type="ECO:0000255" key="2"/>
<evidence type="ECO:0000269" key="3">
    <source>
    </source>
</evidence>
<evidence type="ECO:0000305" key="4"/>
<proteinExistence type="inferred from homology"/>
<organism>
    <name type="scientific">Schizosaccharomyces pombe (strain 972 / ATCC 24843)</name>
    <name type="common">Fission yeast</name>
    <dbReference type="NCBI Taxonomy" id="284812"/>
    <lineage>
        <taxon>Eukaryota</taxon>
        <taxon>Fungi</taxon>
        <taxon>Dikarya</taxon>
        <taxon>Ascomycota</taxon>
        <taxon>Taphrinomycotina</taxon>
        <taxon>Schizosaccharomycetes</taxon>
        <taxon>Schizosaccharomycetales</taxon>
        <taxon>Schizosaccharomycetaceae</taxon>
        <taxon>Schizosaccharomyces</taxon>
    </lineage>
</organism>
<comment type="catalytic activity">
    <reaction>
        <text>a monocarboxylic acid amide + H2O = a monocarboxylate + NH4(+)</text>
        <dbReference type="Rhea" id="RHEA:12020"/>
        <dbReference type="ChEBI" id="CHEBI:15377"/>
        <dbReference type="ChEBI" id="CHEBI:28938"/>
        <dbReference type="ChEBI" id="CHEBI:35757"/>
        <dbReference type="ChEBI" id="CHEBI:83628"/>
        <dbReference type="EC" id="3.5.1.4"/>
    </reaction>
</comment>
<comment type="subcellular location">
    <subcellularLocation>
        <location evidence="3">Cytoplasm</location>
    </subcellularLocation>
</comment>
<comment type="similarity">
    <text evidence="4">Belongs to the amidase family.</text>
</comment>
<reference key="1">
    <citation type="journal article" date="2002" name="Nature">
        <title>The genome sequence of Schizosaccharomyces pombe.</title>
        <authorList>
            <person name="Wood V."/>
            <person name="Gwilliam R."/>
            <person name="Rajandream M.A."/>
            <person name="Lyne M.H."/>
            <person name="Lyne R."/>
            <person name="Stewart A."/>
            <person name="Sgouros J.G."/>
            <person name="Peat N."/>
            <person name="Hayles J."/>
            <person name="Baker S.G."/>
            <person name="Basham D."/>
            <person name="Bowman S."/>
            <person name="Brooks K."/>
            <person name="Brown D."/>
            <person name="Brown S."/>
            <person name="Chillingworth T."/>
            <person name="Churcher C.M."/>
            <person name="Collins M."/>
            <person name="Connor R."/>
            <person name="Cronin A."/>
            <person name="Davis P."/>
            <person name="Feltwell T."/>
            <person name="Fraser A."/>
            <person name="Gentles S."/>
            <person name="Goble A."/>
            <person name="Hamlin N."/>
            <person name="Harris D.E."/>
            <person name="Hidalgo J."/>
            <person name="Hodgson G."/>
            <person name="Holroyd S."/>
            <person name="Hornsby T."/>
            <person name="Howarth S."/>
            <person name="Huckle E.J."/>
            <person name="Hunt S."/>
            <person name="Jagels K."/>
            <person name="James K.D."/>
            <person name="Jones L."/>
            <person name="Jones M."/>
            <person name="Leather S."/>
            <person name="McDonald S."/>
            <person name="McLean J."/>
            <person name="Mooney P."/>
            <person name="Moule S."/>
            <person name="Mungall K.L."/>
            <person name="Murphy L.D."/>
            <person name="Niblett D."/>
            <person name="Odell C."/>
            <person name="Oliver K."/>
            <person name="O'Neil S."/>
            <person name="Pearson D."/>
            <person name="Quail M.A."/>
            <person name="Rabbinowitsch E."/>
            <person name="Rutherford K.M."/>
            <person name="Rutter S."/>
            <person name="Saunders D."/>
            <person name="Seeger K."/>
            <person name="Sharp S."/>
            <person name="Skelton J."/>
            <person name="Simmonds M.N."/>
            <person name="Squares R."/>
            <person name="Squares S."/>
            <person name="Stevens K."/>
            <person name="Taylor K."/>
            <person name="Taylor R.G."/>
            <person name="Tivey A."/>
            <person name="Walsh S.V."/>
            <person name="Warren T."/>
            <person name="Whitehead S."/>
            <person name="Woodward J.R."/>
            <person name="Volckaert G."/>
            <person name="Aert R."/>
            <person name="Robben J."/>
            <person name="Grymonprez B."/>
            <person name="Weltjens I."/>
            <person name="Vanstreels E."/>
            <person name="Rieger M."/>
            <person name="Schaefer M."/>
            <person name="Mueller-Auer S."/>
            <person name="Gabel C."/>
            <person name="Fuchs M."/>
            <person name="Duesterhoeft A."/>
            <person name="Fritzc C."/>
            <person name="Holzer E."/>
            <person name="Moestl D."/>
            <person name="Hilbert H."/>
            <person name="Borzym K."/>
            <person name="Langer I."/>
            <person name="Beck A."/>
            <person name="Lehrach H."/>
            <person name="Reinhardt R."/>
            <person name="Pohl T.M."/>
            <person name="Eger P."/>
            <person name="Zimmermann W."/>
            <person name="Wedler H."/>
            <person name="Wambutt R."/>
            <person name="Purnelle B."/>
            <person name="Goffeau A."/>
            <person name="Cadieu E."/>
            <person name="Dreano S."/>
            <person name="Gloux S."/>
            <person name="Lelaure V."/>
            <person name="Mottier S."/>
            <person name="Galibert F."/>
            <person name="Aves S.J."/>
            <person name="Xiang Z."/>
            <person name="Hunt C."/>
            <person name="Moore K."/>
            <person name="Hurst S.M."/>
            <person name="Lucas M."/>
            <person name="Rochet M."/>
            <person name="Gaillardin C."/>
            <person name="Tallada V.A."/>
            <person name="Garzon A."/>
            <person name="Thode G."/>
            <person name="Daga R.R."/>
            <person name="Cruzado L."/>
            <person name="Jimenez J."/>
            <person name="Sanchez M."/>
            <person name="del Rey F."/>
            <person name="Benito J."/>
            <person name="Dominguez A."/>
            <person name="Revuelta J.L."/>
            <person name="Moreno S."/>
            <person name="Armstrong J."/>
            <person name="Forsburg S.L."/>
            <person name="Cerutti L."/>
            <person name="Lowe T."/>
            <person name="McCombie W.R."/>
            <person name="Paulsen I."/>
            <person name="Potashkin J."/>
            <person name="Shpakovski G.V."/>
            <person name="Ussery D."/>
            <person name="Barrell B.G."/>
            <person name="Nurse P."/>
        </authorList>
    </citation>
    <scope>NUCLEOTIDE SEQUENCE [LARGE SCALE GENOMIC DNA]</scope>
    <source>
        <strain>972 / ATCC 24843</strain>
    </source>
</reference>
<reference key="2">
    <citation type="journal article" date="2006" name="Nat. Biotechnol.">
        <title>ORFeome cloning and global analysis of protein localization in the fission yeast Schizosaccharomyces pombe.</title>
        <authorList>
            <person name="Matsuyama A."/>
            <person name="Arai R."/>
            <person name="Yashiroda Y."/>
            <person name="Shirai A."/>
            <person name="Kamata A."/>
            <person name="Sekido S."/>
            <person name="Kobayashi Y."/>
            <person name="Hashimoto A."/>
            <person name="Hamamoto M."/>
            <person name="Hiraoka Y."/>
            <person name="Horinouchi S."/>
            <person name="Yoshida M."/>
        </authorList>
    </citation>
    <scope>SUBCELLULAR LOCATION [LARGE SCALE ANALYSIS]</scope>
</reference>
<sequence>MKLQLLFLTLAQLAKHGLAIPLLQSSKTTTNSTLVASQEVNFTTYVYPDTNSTNIFPMPKCQNITLEDATIDQLQNYMENGILTSTDIVHCYLDRYLQVNPYVNGILQLNPDVLTIASELDDERANGIIRGPLHGIPFIVKDNFATKDKMDTTAGSYALLGSIVPRDAYVVKQLREAGAVLFGHATLSEWADMRSNDYSEGYSARGGQSRCPFNLTVNPGGSSSGSAISVASNMIAFALGTETDGSIIDPAMRNGVVGLKPTVGLTSRYGVIPESEHQDTTGPIARTVRDAVYVFQSMWGIDENDIYTLNQTGKTPEDGDYMKFLSNKTSLEGARFGLPWKRLWQNAKADEIDRLLEVVKQIEEAGAIVYNNTNFYNLDVISNDGWNWELGSVNESEYTVVKVDFYNNIKSYLSEVKNTEIHSLEDIVEYNNKYMGTEGGKPNIVPAFSSGQDGFLASLEWGGVKNETYWQAVEYVRRTSQDEGIDYALNYTDPKTNDSFILNGLLVPSGTSITYQQAAKAGYPMITLPIGVKTNGRPFGLGIMHSAWQEPQLIKYGSAIEDLLQYKAKPKFYEYVAKNVPVW</sequence>
<protein>
    <recommendedName>
        <fullName>Putative amidase C869.01</fullName>
        <ecNumber>3.5.1.4</ecNumber>
    </recommendedName>
</protein>
<feature type="signal peptide" evidence="2">
    <location>
        <begin position="1"/>
        <end position="19"/>
    </location>
</feature>
<feature type="chain" id="PRO_0000316204" description="Putative amidase C869.01">
    <location>
        <begin position="20"/>
        <end position="583"/>
    </location>
</feature>
<feature type="active site" description="Charge relay system" evidence="1">
    <location>
        <position position="141"/>
    </location>
</feature>
<feature type="active site" description="Charge relay system" evidence="1">
    <location>
        <position position="222"/>
    </location>
</feature>
<feature type="active site" description="Acyl-ester intermediate" evidence="1">
    <location>
        <position position="246"/>
    </location>
</feature>
<gene>
    <name type="ORF">SPAC869.01</name>
</gene>
<name>YI01_SCHPO</name>